<feature type="chain" id="PRO_0000068621" description="HTH-type transcriptional regulator RpiR">
    <location>
        <begin position="1"/>
        <end position="296"/>
    </location>
</feature>
<feature type="domain" description="HTH rpiR-type" evidence="2">
    <location>
        <begin position="14"/>
        <end position="90"/>
    </location>
</feature>
<feature type="domain" description="SIS" evidence="3">
    <location>
        <begin position="134"/>
        <end position="274"/>
    </location>
</feature>
<feature type="DNA-binding region" description="H-T-H motif" evidence="2">
    <location>
        <begin position="50"/>
        <end position="69"/>
    </location>
</feature>
<gene>
    <name type="primary">rpiR</name>
    <name type="ordered locus">c5095</name>
</gene>
<sequence>MSQSEFDSALPNGIGLAPYLRMKQEGMTENESRIVEWLLKPGNLSCAPAIKDVAEALAVSEAMIVKVSKLLGFSGFRNLRSALEDYFSQSEQVLPSELAFDEAPQDVVNKVFNITLRTIMEGQSIVNVDEIHRAARFFYQARQRDLYGAGGSNAICADVQHKFLRIGVRCQAYPDAHIMMMSASLLQEGDVVLVVTHSGRTSDVKAAVELAKKNGAKIICITHSYHSPIAKLADYIICSPAPETPLLGRNASARILQLTLLDAFFVSVAQLNIEQANINMQKTGAIVDFFSPGALK</sequence>
<reference key="1">
    <citation type="journal article" date="2002" name="Proc. Natl. Acad. Sci. U.S.A.">
        <title>Extensive mosaic structure revealed by the complete genome sequence of uropathogenic Escherichia coli.</title>
        <authorList>
            <person name="Welch R.A."/>
            <person name="Burland V."/>
            <person name="Plunkett G. III"/>
            <person name="Redford P."/>
            <person name="Roesch P."/>
            <person name="Rasko D."/>
            <person name="Buckles E.L."/>
            <person name="Liou S.-R."/>
            <person name="Boutin A."/>
            <person name="Hackett J."/>
            <person name="Stroud D."/>
            <person name="Mayhew G.F."/>
            <person name="Rose D.J."/>
            <person name="Zhou S."/>
            <person name="Schwartz D.C."/>
            <person name="Perna N.T."/>
            <person name="Mobley H.L.T."/>
            <person name="Donnenberg M.S."/>
            <person name="Blattner F.R."/>
        </authorList>
    </citation>
    <scope>NUCLEOTIDE SEQUENCE [LARGE SCALE GENOMIC DNA]</scope>
    <source>
        <strain>CFT073 / ATCC 700928 / UPEC</strain>
    </source>
</reference>
<dbReference type="EMBL" id="AE014075">
    <property type="protein sequence ID" value="AAN83520.1"/>
    <property type="status" value="ALT_INIT"/>
    <property type="molecule type" value="Genomic_DNA"/>
</dbReference>
<dbReference type="RefSeq" id="WP_000083216.1">
    <property type="nucleotide sequence ID" value="NZ_CP051263.1"/>
</dbReference>
<dbReference type="SMR" id="P0ACS8"/>
<dbReference type="STRING" id="199310.c5095"/>
<dbReference type="DNASU" id="1038300"/>
<dbReference type="KEGG" id="ecc:c5095"/>
<dbReference type="eggNOG" id="COG1737">
    <property type="taxonomic scope" value="Bacteria"/>
</dbReference>
<dbReference type="HOGENOM" id="CLU_055769_0_5_6"/>
<dbReference type="Proteomes" id="UP000001410">
    <property type="component" value="Chromosome"/>
</dbReference>
<dbReference type="GO" id="GO:0097367">
    <property type="term" value="F:carbohydrate derivative binding"/>
    <property type="evidence" value="ECO:0007669"/>
    <property type="project" value="InterPro"/>
</dbReference>
<dbReference type="GO" id="GO:0003677">
    <property type="term" value="F:DNA binding"/>
    <property type="evidence" value="ECO:0007669"/>
    <property type="project" value="UniProtKB-KW"/>
</dbReference>
<dbReference type="GO" id="GO:0003700">
    <property type="term" value="F:DNA-binding transcription factor activity"/>
    <property type="evidence" value="ECO:0007669"/>
    <property type="project" value="InterPro"/>
</dbReference>
<dbReference type="GO" id="GO:1901135">
    <property type="term" value="P:carbohydrate derivative metabolic process"/>
    <property type="evidence" value="ECO:0007669"/>
    <property type="project" value="InterPro"/>
</dbReference>
<dbReference type="CDD" id="cd05013">
    <property type="entry name" value="SIS_RpiR"/>
    <property type="match status" value="1"/>
</dbReference>
<dbReference type="FunFam" id="1.10.10.10:FF:000323">
    <property type="entry name" value="HTH-type transcriptional regulator rpiR"/>
    <property type="match status" value="1"/>
</dbReference>
<dbReference type="FunFam" id="3.40.50.10490:FF:000027">
    <property type="entry name" value="HTH-type transcriptional regulator rpiR"/>
    <property type="match status" value="1"/>
</dbReference>
<dbReference type="Gene3D" id="3.40.50.10490">
    <property type="entry name" value="Glucose-6-phosphate isomerase like protein, domain 1"/>
    <property type="match status" value="1"/>
</dbReference>
<dbReference type="Gene3D" id="1.10.10.10">
    <property type="entry name" value="Winged helix-like DNA-binding domain superfamily/Winged helix DNA-binding domain"/>
    <property type="match status" value="1"/>
</dbReference>
<dbReference type="InterPro" id="IPR009057">
    <property type="entry name" value="Homeodomain-like_sf"/>
</dbReference>
<dbReference type="InterPro" id="IPR000281">
    <property type="entry name" value="HTH_RpiR"/>
</dbReference>
<dbReference type="InterPro" id="IPR047640">
    <property type="entry name" value="RpiR-like"/>
</dbReference>
<dbReference type="InterPro" id="IPR035472">
    <property type="entry name" value="RpiR-like_SIS"/>
</dbReference>
<dbReference type="InterPro" id="IPR001347">
    <property type="entry name" value="SIS_dom"/>
</dbReference>
<dbReference type="InterPro" id="IPR046348">
    <property type="entry name" value="SIS_dom_sf"/>
</dbReference>
<dbReference type="InterPro" id="IPR036388">
    <property type="entry name" value="WH-like_DNA-bd_sf"/>
</dbReference>
<dbReference type="NCBIfam" id="NF008458">
    <property type="entry name" value="PRK11337.1"/>
    <property type="match status" value="1"/>
</dbReference>
<dbReference type="PANTHER" id="PTHR30514">
    <property type="entry name" value="GLUCOKINASE"/>
    <property type="match status" value="1"/>
</dbReference>
<dbReference type="PANTHER" id="PTHR30514:SF1">
    <property type="entry name" value="HTH-TYPE TRANSCRIPTIONAL REGULATOR HEXR-RELATED"/>
    <property type="match status" value="1"/>
</dbReference>
<dbReference type="Pfam" id="PF01418">
    <property type="entry name" value="HTH_6"/>
    <property type="match status" value="1"/>
</dbReference>
<dbReference type="Pfam" id="PF01380">
    <property type="entry name" value="SIS"/>
    <property type="match status" value="1"/>
</dbReference>
<dbReference type="SUPFAM" id="SSF46689">
    <property type="entry name" value="Homeodomain-like"/>
    <property type="match status" value="1"/>
</dbReference>
<dbReference type="SUPFAM" id="SSF53697">
    <property type="entry name" value="SIS domain"/>
    <property type="match status" value="1"/>
</dbReference>
<dbReference type="PROSITE" id="PS51071">
    <property type="entry name" value="HTH_RPIR"/>
    <property type="match status" value="1"/>
</dbReference>
<dbReference type="PROSITE" id="PS51464">
    <property type="entry name" value="SIS"/>
    <property type="match status" value="1"/>
</dbReference>
<organism>
    <name type="scientific">Escherichia coli O6:H1 (strain CFT073 / ATCC 700928 / UPEC)</name>
    <dbReference type="NCBI Taxonomy" id="199310"/>
    <lineage>
        <taxon>Bacteria</taxon>
        <taxon>Pseudomonadati</taxon>
        <taxon>Pseudomonadota</taxon>
        <taxon>Gammaproteobacteria</taxon>
        <taxon>Enterobacterales</taxon>
        <taxon>Enterobacteriaceae</taxon>
        <taxon>Escherichia</taxon>
    </lineage>
</organism>
<evidence type="ECO:0000250" key="1"/>
<evidence type="ECO:0000255" key="2">
    <source>
        <dbReference type="PROSITE-ProRule" id="PRU00390"/>
    </source>
</evidence>
<evidence type="ECO:0000255" key="3">
    <source>
        <dbReference type="PROSITE-ProRule" id="PRU00797"/>
    </source>
</evidence>
<evidence type="ECO:0000305" key="4"/>
<keyword id="KW-0238">DNA-binding</keyword>
<keyword id="KW-1185">Reference proteome</keyword>
<keyword id="KW-0678">Repressor</keyword>
<keyword id="KW-0804">Transcription</keyword>
<keyword id="KW-0805">Transcription regulation</keyword>
<proteinExistence type="inferred from homology"/>
<comment type="function">
    <text evidence="1">Regulatory protein involved in rpiB gene repression. Also involved in als operon repression (By similarity).</text>
</comment>
<comment type="sequence caution" evidence="4">
    <conflict type="erroneous initiation">
        <sequence resource="EMBL-CDS" id="AAN83520"/>
    </conflict>
</comment>
<protein>
    <recommendedName>
        <fullName>HTH-type transcriptional regulator RpiR</fullName>
    </recommendedName>
    <alternativeName>
        <fullName>Als operon repressor</fullName>
    </alternativeName>
</protein>
<accession>P0ACS8</accession>
<accession>P39266</accession>
<accession>P76791</accession>
<name>RPIR_ECOL6</name>